<feature type="chain" id="PRO_1000165381" description="Small ribosomal subunit protein uS4">
    <location>
        <begin position="1"/>
        <end position="200"/>
    </location>
</feature>
<feature type="domain" description="S4 RNA-binding" evidence="1">
    <location>
        <begin position="92"/>
        <end position="152"/>
    </location>
</feature>
<feature type="region of interest" description="Disordered" evidence="2">
    <location>
        <begin position="22"/>
        <end position="42"/>
    </location>
</feature>
<evidence type="ECO:0000255" key="1">
    <source>
        <dbReference type="HAMAP-Rule" id="MF_01306"/>
    </source>
</evidence>
<evidence type="ECO:0000256" key="2">
    <source>
        <dbReference type="SAM" id="MobiDB-lite"/>
    </source>
</evidence>
<evidence type="ECO:0000305" key="3"/>
<sequence length="200" mass="22996">MARYTGPAWKLSRRLGISLSGTGKELEKRPYAPGPHGPNQRKKLSEYGLQLQEKQKLRHMYGMTERQFRRTFDQAGKMPGKHGENFMILLEARLDNLVYRMGLARTRRAARQLVNHGHIMVDGARVDIPSYRVKPGQTISVREKSNNLVVVKEAIEVNNFVPEYLTFDADKLEATYTRHAERAELPAEINEALIVEFYSR</sequence>
<accession>C3L9W4</accession>
<organism>
    <name type="scientific">Bacillus anthracis (strain CDC 684 / NRRL 3495)</name>
    <dbReference type="NCBI Taxonomy" id="568206"/>
    <lineage>
        <taxon>Bacteria</taxon>
        <taxon>Bacillati</taxon>
        <taxon>Bacillota</taxon>
        <taxon>Bacilli</taxon>
        <taxon>Bacillales</taxon>
        <taxon>Bacillaceae</taxon>
        <taxon>Bacillus</taxon>
        <taxon>Bacillus cereus group</taxon>
    </lineage>
</organism>
<proteinExistence type="inferred from homology"/>
<name>RS4_BACAC</name>
<gene>
    <name evidence="1" type="primary">rpsD</name>
    <name type="ordered locus">BAMEG_4940</name>
</gene>
<protein>
    <recommendedName>
        <fullName evidence="1">Small ribosomal subunit protein uS4</fullName>
    </recommendedName>
    <alternativeName>
        <fullName evidence="3">30S ribosomal protein S4</fullName>
    </alternativeName>
</protein>
<keyword id="KW-0687">Ribonucleoprotein</keyword>
<keyword id="KW-0689">Ribosomal protein</keyword>
<keyword id="KW-0694">RNA-binding</keyword>
<keyword id="KW-0699">rRNA-binding</keyword>
<reference key="1">
    <citation type="submission" date="2008-10" db="EMBL/GenBank/DDBJ databases">
        <title>Genome sequence of Bacillus anthracis str. CDC 684.</title>
        <authorList>
            <person name="Dodson R.J."/>
            <person name="Munk A.C."/>
            <person name="Brettin T."/>
            <person name="Bruce D."/>
            <person name="Detter C."/>
            <person name="Tapia R."/>
            <person name="Han C."/>
            <person name="Sutton G."/>
            <person name="Sims D."/>
        </authorList>
    </citation>
    <scope>NUCLEOTIDE SEQUENCE [LARGE SCALE GENOMIC DNA]</scope>
    <source>
        <strain>CDC 684 / NRRL 3495</strain>
    </source>
</reference>
<comment type="function">
    <text evidence="1">One of the primary rRNA binding proteins, it binds directly to 16S rRNA where it nucleates assembly of the body of the 30S subunit.</text>
</comment>
<comment type="function">
    <text evidence="1">With S5 and S12 plays an important role in translational accuracy.</text>
</comment>
<comment type="subunit">
    <text evidence="1">Part of the 30S ribosomal subunit. Contacts protein S5. The interaction surface between S4 and S5 is involved in control of translational fidelity.</text>
</comment>
<comment type="similarity">
    <text evidence="1">Belongs to the universal ribosomal protein uS4 family.</text>
</comment>
<dbReference type="EMBL" id="CP001215">
    <property type="protein sequence ID" value="ACP16348.1"/>
    <property type="molecule type" value="Genomic_DNA"/>
</dbReference>
<dbReference type="RefSeq" id="WP_000135311.1">
    <property type="nucleotide sequence ID" value="NC_012581.1"/>
</dbReference>
<dbReference type="SMR" id="C3L9W4"/>
<dbReference type="GeneID" id="83638371"/>
<dbReference type="KEGG" id="bah:BAMEG_4940"/>
<dbReference type="HOGENOM" id="CLU_092403_0_1_9"/>
<dbReference type="GO" id="GO:0015935">
    <property type="term" value="C:small ribosomal subunit"/>
    <property type="evidence" value="ECO:0007669"/>
    <property type="project" value="InterPro"/>
</dbReference>
<dbReference type="GO" id="GO:0019843">
    <property type="term" value="F:rRNA binding"/>
    <property type="evidence" value="ECO:0007669"/>
    <property type="project" value="UniProtKB-UniRule"/>
</dbReference>
<dbReference type="GO" id="GO:0003735">
    <property type="term" value="F:structural constituent of ribosome"/>
    <property type="evidence" value="ECO:0007669"/>
    <property type="project" value="InterPro"/>
</dbReference>
<dbReference type="GO" id="GO:0042274">
    <property type="term" value="P:ribosomal small subunit biogenesis"/>
    <property type="evidence" value="ECO:0007669"/>
    <property type="project" value="TreeGrafter"/>
</dbReference>
<dbReference type="GO" id="GO:0006412">
    <property type="term" value="P:translation"/>
    <property type="evidence" value="ECO:0007669"/>
    <property type="project" value="UniProtKB-UniRule"/>
</dbReference>
<dbReference type="CDD" id="cd00165">
    <property type="entry name" value="S4"/>
    <property type="match status" value="1"/>
</dbReference>
<dbReference type="FunFam" id="1.10.1050.10:FF:000001">
    <property type="entry name" value="30S ribosomal protein S4"/>
    <property type="match status" value="1"/>
</dbReference>
<dbReference type="FunFam" id="3.10.290.10:FF:000001">
    <property type="entry name" value="30S ribosomal protein S4"/>
    <property type="match status" value="1"/>
</dbReference>
<dbReference type="Gene3D" id="1.10.1050.10">
    <property type="entry name" value="Ribosomal Protein S4 Delta 41, Chain A, domain 1"/>
    <property type="match status" value="1"/>
</dbReference>
<dbReference type="Gene3D" id="3.10.290.10">
    <property type="entry name" value="RNA-binding S4 domain"/>
    <property type="match status" value="1"/>
</dbReference>
<dbReference type="HAMAP" id="MF_01306_B">
    <property type="entry name" value="Ribosomal_uS4_B"/>
    <property type="match status" value="1"/>
</dbReference>
<dbReference type="InterPro" id="IPR022801">
    <property type="entry name" value="Ribosomal_uS4"/>
</dbReference>
<dbReference type="InterPro" id="IPR005709">
    <property type="entry name" value="Ribosomal_uS4_bac-type"/>
</dbReference>
<dbReference type="InterPro" id="IPR018079">
    <property type="entry name" value="Ribosomal_uS4_CS"/>
</dbReference>
<dbReference type="InterPro" id="IPR001912">
    <property type="entry name" value="Ribosomal_uS4_N"/>
</dbReference>
<dbReference type="InterPro" id="IPR002942">
    <property type="entry name" value="S4_RNA-bd"/>
</dbReference>
<dbReference type="InterPro" id="IPR036986">
    <property type="entry name" value="S4_RNA-bd_sf"/>
</dbReference>
<dbReference type="NCBIfam" id="NF003717">
    <property type="entry name" value="PRK05327.1"/>
    <property type="match status" value="1"/>
</dbReference>
<dbReference type="NCBIfam" id="TIGR01017">
    <property type="entry name" value="rpsD_bact"/>
    <property type="match status" value="1"/>
</dbReference>
<dbReference type="PANTHER" id="PTHR11831">
    <property type="entry name" value="30S 40S RIBOSOMAL PROTEIN"/>
    <property type="match status" value="1"/>
</dbReference>
<dbReference type="PANTHER" id="PTHR11831:SF4">
    <property type="entry name" value="SMALL RIBOSOMAL SUBUNIT PROTEIN US4M"/>
    <property type="match status" value="1"/>
</dbReference>
<dbReference type="Pfam" id="PF00163">
    <property type="entry name" value="Ribosomal_S4"/>
    <property type="match status" value="1"/>
</dbReference>
<dbReference type="Pfam" id="PF01479">
    <property type="entry name" value="S4"/>
    <property type="match status" value="1"/>
</dbReference>
<dbReference type="SMART" id="SM01390">
    <property type="entry name" value="Ribosomal_S4"/>
    <property type="match status" value="1"/>
</dbReference>
<dbReference type="SMART" id="SM00363">
    <property type="entry name" value="S4"/>
    <property type="match status" value="1"/>
</dbReference>
<dbReference type="SUPFAM" id="SSF55174">
    <property type="entry name" value="Alpha-L RNA-binding motif"/>
    <property type="match status" value="1"/>
</dbReference>
<dbReference type="PROSITE" id="PS00632">
    <property type="entry name" value="RIBOSOMAL_S4"/>
    <property type="match status" value="1"/>
</dbReference>
<dbReference type="PROSITE" id="PS50889">
    <property type="entry name" value="S4"/>
    <property type="match status" value="1"/>
</dbReference>